<sequence length="305" mass="31604">MLRIAEEVTTALEEGRAVVALESTLISHGLPYPHNLAVAEGLEAEVRAAGAVPATIGLIEGVPVIGLNGNELERLAVGGDRVRKLSRRDIGAAIVDHADGATTVAATMALAAAAGIEVFATGGIGGVHRGATHSWDVSADLTELGRTPVLVVCAGAKAILDLPATLEYLETQGVPVVGYQTVEFPAFYTPHSGLTVAAVAADALAAARMWRIQRRYHTFAAPGGMLLCVPPPERHALEREAVEAAIGRALARAEAEGVRGPAVTPFLLAAMAEETSGESIETNIALLRNNTRVAAEVAVRISELG</sequence>
<dbReference type="EC" id="4.2.1.70" evidence="1"/>
<dbReference type="EMBL" id="CP001364">
    <property type="protein sequence ID" value="ACM53593.1"/>
    <property type="molecule type" value="Genomic_DNA"/>
</dbReference>
<dbReference type="SMR" id="B9LGZ1"/>
<dbReference type="KEGG" id="chl:Chy400_2196"/>
<dbReference type="HOGENOM" id="CLU_012201_0_1_0"/>
<dbReference type="OrthoDB" id="9805870at2"/>
<dbReference type="GO" id="GO:0005737">
    <property type="term" value="C:cytoplasm"/>
    <property type="evidence" value="ECO:0007669"/>
    <property type="project" value="TreeGrafter"/>
</dbReference>
<dbReference type="GO" id="GO:0016798">
    <property type="term" value="F:hydrolase activity, acting on glycosyl bonds"/>
    <property type="evidence" value="ECO:0007669"/>
    <property type="project" value="UniProtKB-KW"/>
</dbReference>
<dbReference type="GO" id="GO:0046872">
    <property type="term" value="F:metal ion binding"/>
    <property type="evidence" value="ECO:0007669"/>
    <property type="project" value="UniProtKB-KW"/>
</dbReference>
<dbReference type="GO" id="GO:0004730">
    <property type="term" value="F:pseudouridylate synthase activity"/>
    <property type="evidence" value="ECO:0007669"/>
    <property type="project" value="UniProtKB-UniRule"/>
</dbReference>
<dbReference type="GO" id="GO:0046113">
    <property type="term" value="P:nucleobase catabolic process"/>
    <property type="evidence" value="ECO:0007669"/>
    <property type="project" value="UniProtKB-UniRule"/>
</dbReference>
<dbReference type="Gene3D" id="3.40.1790.10">
    <property type="entry name" value="Indigoidine synthase domain"/>
    <property type="match status" value="1"/>
</dbReference>
<dbReference type="HAMAP" id="MF_01876">
    <property type="entry name" value="PsiMP_glycosidase"/>
    <property type="match status" value="1"/>
</dbReference>
<dbReference type="InterPro" id="IPR022830">
    <property type="entry name" value="Indigdn_synthA-like"/>
</dbReference>
<dbReference type="InterPro" id="IPR007342">
    <property type="entry name" value="PsuG"/>
</dbReference>
<dbReference type="PANTHER" id="PTHR42909:SF1">
    <property type="entry name" value="CARBOHYDRATE KINASE PFKB DOMAIN-CONTAINING PROTEIN"/>
    <property type="match status" value="1"/>
</dbReference>
<dbReference type="PANTHER" id="PTHR42909">
    <property type="entry name" value="ZGC:136858"/>
    <property type="match status" value="1"/>
</dbReference>
<dbReference type="Pfam" id="PF04227">
    <property type="entry name" value="Indigoidine_A"/>
    <property type="match status" value="1"/>
</dbReference>
<dbReference type="SUPFAM" id="SSF110581">
    <property type="entry name" value="Indigoidine synthase A-like"/>
    <property type="match status" value="1"/>
</dbReference>
<name>PSUG_CHLSY</name>
<keyword id="KW-0326">Glycosidase</keyword>
<keyword id="KW-0378">Hydrolase</keyword>
<keyword id="KW-0456">Lyase</keyword>
<keyword id="KW-0464">Manganese</keyword>
<keyword id="KW-0479">Metal-binding</keyword>
<accession>B9LGZ1</accession>
<comment type="function">
    <text evidence="1">Catalyzes the reversible cleavage of pseudouridine 5'-phosphate (PsiMP) to ribose 5-phosphate and uracil. Functions biologically in the cleavage direction, as part of a pseudouridine degradation pathway.</text>
</comment>
<comment type="catalytic activity">
    <reaction evidence="1">
        <text>D-ribose 5-phosphate + uracil = psi-UMP + H2O</text>
        <dbReference type="Rhea" id="RHEA:18337"/>
        <dbReference type="ChEBI" id="CHEBI:15377"/>
        <dbReference type="ChEBI" id="CHEBI:17568"/>
        <dbReference type="ChEBI" id="CHEBI:58380"/>
        <dbReference type="ChEBI" id="CHEBI:78346"/>
        <dbReference type="EC" id="4.2.1.70"/>
    </reaction>
</comment>
<comment type="cofactor">
    <cofactor evidence="1">
        <name>Mn(2+)</name>
        <dbReference type="ChEBI" id="CHEBI:29035"/>
    </cofactor>
    <text evidence="1">Binds 1 Mn(2+) ion per subunit.</text>
</comment>
<comment type="subunit">
    <text evidence="1">Homotrimer.</text>
</comment>
<comment type="similarity">
    <text evidence="1">Belongs to the pseudouridine-5'-phosphate glycosidase family.</text>
</comment>
<evidence type="ECO:0000255" key="1">
    <source>
        <dbReference type="HAMAP-Rule" id="MF_01876"/>
    </source>
</evidence>
<protein>
    <recommendedName>
        <fullName evidence="1">Pseudouridine-5'-phosphate glycosidase</fullName>
        <shortName evidence="1">PsiMP glycosidase</shortName>
        <ecNumber evidence="1">4.2.1.70</ecNumber>
    </recommendedName>
</protein>
<gene>
    <name evidence="1" type="primary">psuG</name>
    <name type="ordered locus">Chy400_2196</name>
</gene>
<feature type="chain" id="PRO_0000390511" description="Pseudouridine-5'-phosphate glycosidase">
    <location>
        <begin position="1"/>
        <end position="305"/>
    </location>
</feature>
<feature type="active site" description="Proton donor" evidence="1">
    <location>
        <position position="22"/>
    </location>
</feature>
<feature type="active site" description="Nucleophile" evidence="1">
    <location>
        <position position="157"/>
    </location>
</feature>
<feature type="binding site" evidence="1">
    <location>
        <position position="84"/>
    </location>
    <ligand>
        <name>substrate</name>
    </ligand>
</feature>
<feature type="binding site" evidence="1">
    <location>
        <position position="104"/>
    </location>
    <ligand>
        <name>substrate</name>
    </ligand>
</feature>
<feature type="binding site" evidence="1">
    <location>
        <position position="136"/>
    </location>
    <ligand>
        <name>Mn(2+)</name>
        <dbReference type="ChEBI" id="CHEBI:29035"/>
    </ligand>
</feature>
<feature type="binding site" evidence="1">
    <location>
        <begin position="138"/>
        <end position="140"/>
    </location>
    <ligand>
        <name>substrate</name>
    </ligand>
</feature>
<organism>
    <name type="scientific">Chloroflexus aurantiacus (strain ATCC 29364 / DSM 637 / Y-400-fl)</name>
    <dbReference type="NCBI Taxonomy" id="480224"/>
    <lineage>
        <taxon>Bacteria</taxon>
        <taxon>Bacillati</taxon>
        <taxon>Chloroflexota</taxon>
        <taxon>Chloroflexia</taxon>
        <taxon>Chloroflexales</taxon>
        <taxon>Chloroflexineae</taxon>
        <taxon>Chloroflexaceae</taxon>
        <taxon>Chloroflexus</taxon>
    </lineage>
</organism>
<reference key="1">
    <citation type="submission" date="2009-01" db="EMBL/GenBank/DDBJ databases">
        <title>Complete sequence of Chloroflexus sp. Y-400-fl.</title>
        <authorList>
            <consortium name="US DOE Joint Genome Institute"/>
            <person name="Lucas S."/>
            <person name="Copeland A."/>
            <person name="Lapidus A."/>
            <person name="Glavina del Rio T."/>
            <person name="Dalin E."/>
            <person name="Tice H."/>
            <person name="Bruce D."/>
            <person name="Goodwin L."/>
            <person name="Pitluck S."/>
            <person name="Sims D."/>
            <person name="Kiss H."/>
            <person name="Brettin T."/>
            <person name="Detter J.C."/>
            <person name="Han C."/>
            <person name="Larimer F."/>
            <person name="Land M."/>
            <person name="Hauser L."/>
            <person name="Kyrpides N."/>
            <person name="Ovchinnikova G."/>
            <person name="Bryant D.A."/>
            <person name="Richardson P."/>
        </authorList>
    </citation>
    <scope>NUCLEOTIDE SEQUENCE [LARGE SCALE GENOMIC DNA]</scope>
    <source>
        <strain>ATCC 29364 / DSM 637 / Y-400-fl</strain>
    </source>
</reference>
<proteinExistence type="inferred from homology"/>